<keyword id="KW-0067">ATP-binding</keyword>
<keyword id="KW-0131">Cell cycle</keyword>
<keyword id="KW-0132">Cell division</keyword>
<keyword id="KW-0460">Magnesium</keyword>
<keyword id="KW-0464">Manganese</keyword>
<keyword id="KW-0479">Metal-binding</keyword>
<keyword id="KW-0498">Mitosis</keyword>
<keyword id="KW-0547">Nucleotide-binding</keyword>
<keyword id="KW-0548">Nucleotidyltransferase</keyword>
<keyword id="KW-0539">Nucleus</keyword>
<keyword id="KW-0597">Phosphoprotein</keyword>
<keyword id="KW-1185">Reference proteome</keyword>
<keyword id="KW-0808">Transferase</keyword>
<sequence length="642" mass="74179">MTRLKAKYSPTKGKRKEDKHTKRMRKSSFTRTQKMLEVFNDNRSHFNKYESLAIDVEDDDTFGNLVLMENDKSDVDIPVIEEVTSSEDEQRAESSKRNNSLEDNQDFIAFSDSSEDETEQIKEDDDERSSFLLTDEHEVSKLTSQQSLNTESACNVEYPWIRNHCHSKQRRIADWLTSEIKDFVHYISPSKNEIKCRNRTIDKLRRAVKELWSDADLHVFGSFATDLYLPGSDIDCVVNSRNRDKEDRNYIYELARHLKNKGLAIRMEVIVKTRVPIIKFIEPQSQLHIDVSFERTNGLEAAKLIREWLRDSPGLRELVLIIKQFLHSRRLNNVHTGGLGGFTVICLVYSFLNMHPRIKSNDIDVLDNLGVLLIDFFELYGKNFGYDDVAISISDGYASYIPKSCWRTLEPSRSKFSLAIQDPGDPNNNISRGSFNMKDIKKAFAGAFELLVNKCWELNSATFKDRVGKSILGNVIKYRGQKRDFNDERDLVQNKAIIENERYHKRRTRIVQEDLFINDTEDLPVEEIYKLDEPAKKKQKAKKDKREGEIKKSAIPSPPPDFGVSRSKLKRKVKKTDQGSLLHQNNLSIDDLMGLSENDQESDQDQKGRDTPSGQDEKSPLETKTVDAQTRRDYWLSKGQAL</sequence>
<protein>
    <recommendedName>
        <fullName>Poly(A) RNA polymerase protein 1</fullName>
        <ecNumber evidence="2">2.7.7.19</ecNumber>
    </recommendedName>
    <alternativeName>
        <fullName>Topoisomerase 1-related protein TRF5</fullName>
    </alternativeName>
</protein>
<dbReference type="EC" id="2.7.7.19" evidence="2"/>
<dbReference type="EMBL" id="U47282">
    <property type="protein sequence ID" value="AAC49397.1"/>
    <property type="status" value="ALT_FRAME"/>
    <property type="molecule type" value="Genomic_DNA"/>
</dbReference>
<dbReference type="EMBL" id="U23084">
    <property type="protein sequence ID" value="AAC49099.1"/>
    <property type="status" value="ALT_FRAME"/>
    <property type="molecule type" value="Genomic_DNA"/>
</dbReference>
<dbReference type="EMBL" id="Z71575">
    <property type="protein sequence ID" value="CAA96217.1"/>
    <property type="status" value="ALT_FRAME"/>
    <property type="molecule type" value="Genomic_DNA"/>
</dbReference>
<dbReference type="EMBL" id="BK006947">
    <property type="protein sequence ID" value="DAA10261.1"/>
    <property type="molecule type" value="Genomic_DNA"/>
</dbReference>
<dbReference type="PIR" id="S60401">
    <property type="entry name" value="S60401"/>
</dbReference>
<dbReference type="RefSeq" id="NP_014100.2">
    <property type="nucleotide sequence ID" value="NM_001183137.1"/>
</dbReference>
<dbReference type="SMR" id="P48561"/>
<dbReference type="BioGRID" id="35539">
    <property type="interactions" value="232"/>
</dbReference>
<dbReference type="ComplexPortal" id="CPX-1680">
    <property type="entry name" value="TRAMP complex variant 5-1"/>
</dbReference>
<dbReference type="ELM" id="P48561"/>
<dbReference type="FunCoup" id="P48561">
    <property type="interactions" value="513"/>
</dbReference>
<dbReference type="IntAct" id="P48561">
    <property type="interactions" value="4"/>
</dbReference>
<dbReference type="MINT" id="P48561"/>
<dbReference type="STRING" id="4932.YNL299W"/>
<dbReference type="iPTMnet" id="P48561"/>
<dbReference type="PaxDb" id="4932-YNL299W"/>
<dbReference type="PeptideAtlas" id="P48561"/>
<dbReference type="EnsemblFungi" id="YNL299W_mRNA">
    <property type="protein sequence ID" value="YNL299W"/>
    <property type="gene ID" value="YNL299W"/>
</dbReference>
<dbReference type="GeneID" id="855417"/>
<dbReference type="KEGG" id="sce:YNL299W"/>
<dbReference type="AGR" id="SGD:S000005243"/>
<dbReference type="SGD" id="S000005243">
    <property type="gene designation" value="TRF5"/>
</dbReference>
<dbReference type="VEuPathDB" id="FungiDB:YNL299W"/>
<dbReference type="eggNOG" id="KOG1906">
    <property type="taxonomic scope" value="Eukaryota"/>
</dbReference>
<dbReference type="GeneTree" id="ENSGT00940000169468"/>
<dbReference type="HOGENOM" id="CLU_013572_5_0_1"/>
<dbReference type="InParanoid" id="P48561"/>
<dbReference type="OMA" id="IIKQFLH"/>
<dbReference type="OrthoDB" id="273917at2759"/>
<dbReference type="BioCyc" id="YEAST:G3O-33287-MONOMER"/>
<dbReference type="BRENDA" id="2.7.7.19">
    <property type="organism ID" value="984"/>
</dbReference>
<dbReference type="BioGRID-ORCS" id="855417">
    <property type="hits" value="0 hits in 10 CRISPR screens"/>
</dbReference>
<dbReference type="CD-CODE" id="BDAE0F88">
    <property type="entry name" value="Nucleolus"/>
</dbReference>
<dbReference type="PRO" id="PR:P48561"/>
<dbReference type="Proteomes" id="UP000002311">
    <property type="component" value="Chromosome XIV"/>
</dbReference>
<dbReference type="RNAct" id="P48561">
    <property type="molecule type" value="protein"/>
</dbReference>
<dbReference type="GO" id="GO:0005730">
    <property type="term" value="C:nucleolus"/>
    <property type="evidence" value="ECO:0007005"/>
    <property type="project" value="SGD"/>
</dbReference>
<dbReference type="GO" id="GO:0031499">
    <property type="term" value="C:TRAMP complex"/>
    <property type="evidence" value="ECO:0000314"/>
    <property type="project" value="SGD"/>
</dbReference>
<dbReference type="GO" id="GO:0005524">
    <property type="term" value="F:ATP binding"/>
    <property type="evidence" value="ECO:0007669"/>
    <property type="project" value="UniProtKB-KW"/>
</dbReference>
<dbReference type="GO" id="GO:0046872">
    <property type="term" value="F:metal ion binding"/>
    <property type="evidence" value="ECO:0007669"/>
    <property type="project" value="UniProtKB-KW"/>
</dbReference>
<dbReference type="GO" id="GO:1990817">
    <property type="term" value="F:poly(A) RNA polymerase activity"/>
    <property type="evidence" value="ECO:0000314"/>
    <property type="project" value="SGD"/>
</dbReference>
<dbReference type="GO" id="GO:0051301">
    <property type="term" value="P:cell division"/>
    <property type="evidence" value="ECO:0007669"/>
    <property type="project" value="UniProtKB-KW"/>
</dbReference>
<dbReference type="GO" id="GO:0071044">
    <property type="term" value="P:histone mRNA catabolic process"/>
    <property type="evidence" value="ECO:0000316"/>
    <property type="project" value="SGD"/>
</dbReference>
<dbReference type="GO" id="GO:0071039">
    <property type="term" value="P:nuclear polyadenylation-dependent CUT catabolic process"/>
    <property type="evidence" value="ECO:0000316"/>
    <property type="project" value="SGD"/>
</dbReference>
<dbReference type="GO" id="GO:0071042">
    <property type="term" value="P:nuclear polyadenylation-dependent mRNA catabolic process"/>
    <property type="evidence" value="ECO:0000316"/>
    <property type="project" value="SGD"/>
</dbReference>
<dbReference type="GO" id="GO:0071035">
    <property type="term" value="P:nuclear polyadenylation-dependent rRNA catabolic process"/>
    <property type="evidence" value="ECO:0000315"/>
    <property type="project" value="SGD"/>
</dbReference>
<dbReference type="GO" id="GO:0071036">
    <property type="term" value="P:nuclear polyadenylation-dependent snoRNA catabolic process"/>
    <property type="evidence" value="ECO:0000316"/>
    <property type="project" value="SGD"/>
</dbReference>
<dbReference type="GO" id="GO:0071037">
    <property type="term" value="P:nuclear polyadenylation-dependent snRNA catabolic process"/>
    <property type="evidence" value="ECO:0000316"/>
    <property type="project" value="SGD"/>
</dbReference>
<dbReference type="GO" id="GO:0071051">
    <property type="term" value="P:poly(A)-dependent snoRNA 3'-end processing"/>
    <property type="evidence" value="ECO:0000316"/>
    <property type="project" value="SGD"/>
</dbReference>
<dbReference type="GO" id="GO:0043634">
    <property type="term" value="P:polyadenylation-dependent ncRNA catabolic process"/>
    <property type="evidence" value="ECO:0000318"/>
    <property type="project" value="GO_Central"/>
</dbReference>
<dbReference type="GO" id="GO:0031123">
    <property type="term" value="P:RNA 3'-end processing"/>
    <property type="evidence" value="ECO:0000318"/>
    <property type="project" value="GO_Central"/>
</dbReference>
<dbReference type="GO" id="GO:0000292">
    <property type="term" value="P:RNA fragment catabolic process"/>
    <property type="evidence" value="ECO:0000303"/>
    <property type="project" value="ComplexPortal"/>
</dbReference>
<dbReference type="GO" id="GO:0071038">
    <property type="term" value="P:TRAMP-dependent tRNA surveillance pathway"/>
    <property type="evidence" value="ECO:0000316"/>
    <property type="project" value="SGD"/>
</dbReference>
<dbReference type="GO" id="GO:0034475">
    <property type="term" value="P:U4 snRNA 3'-end processing"/>
    <property type="evidence" value="ECO:0000315"/>
    <property type="project" value="SGD"/>
</dbReference>
<dbReference type="CDD" id="cd05402">
    <property type="entry name" value="NT_PAP_TUTase"/>
    <property type="match status" value="1"/>
</dbReference>
<dbReference type="FunFam" id="3.30.460.10:FF:000006">
    <property type="entry name" value="non-canonical poly(A) RNA polymerase PAPD5"/>
    <property type="match status" value="1"/>
</dbReference>
<dbReference type="FunFam" id="1.10.1410.10:FF:000003">
    <property type="entry name" value="non-canonical poly(A) RNA polymerase PAPD7"/>
    <property type="match status" value="1"/>
</dbReference>
<dbReference type="Gene3D" id="1.10.1410.10">
    <property type="match status" value="1"/>
</dbReference>
<dbReference type="Gene3D" id="3.30.460.10">
    <property type="entry name" value="Beta Polymerase, domain 2"/>
    <property type="match status" value="1"/>
</dbReference>
<dbReference type="InterPro" id="IPR054708">
    <property type="entry name" value="MTPAP-like_central"/>
</dbReference>
<dbReference type="InterPro" id="IPR043519">
    <property type="entry name" value="NT_sf"/>
</dbReference>
<dbReference type="InterPro" id="IPR002058">
    <property type="entry name" value="PAP_assoc"/>
</dbReference>
<dbReference type="InterPro" id="IPR045862">
    <property type="entry name" value="Trf4-like"/>
</dbReference>
<dbReference type="PANTHER" id="PTHR23092:SF15">
    <property type="entry name" value="INACTIVE NON-CANONICAL POLY(A) RNA POLYMERASE PROTEIN TRF4-2-RELATED"/>
    <property type="match status" value="1"/>
</dbReference>
<dbReference type="PANTHER" id="PTHR23092">
    <property type="entry name" value="POLY(A) RNA POLYMERASE"/>
    <property type="match status" value="1"/>
</dbReference>
<dbReference type="Pfam" id="PF22600">
    <property type="entry name" value="MTPAP-like_central"/>
    <property type="match status" value="1"/>
</dbReference>
<dbReference type="Pfam" id="PF03828">
    <property type="entry name" value="PAP_assoc"/>
    <property type="match status" value="1"/>
</dbReference>
<dbReference type="SUPFAM" id="SSF81301">
    <property type="entry name" value="Nucleotidyltransferase"/>
    <property type="match status" value="1"/>
</dbReference>
<dbReference type="SUPFAM" id="SSF81631">
    <property type="entry name" value="PAP/OAS1 substrate-binding domain"/>
    <property type="match status" value="1"/>
</dbReference>
<evidence type="ECO:0000250" key="1">
    <source>
        <dbReference type="UniProtKB" id="O13833"/>
    </source>
</evidence>
<evidence type="ECO:0000250" key="2">
    <source>
        <dbReference type="UniProtKB" id="P53632"/>
    </source>
</evidence>
<evidence type="ECO:0000256" key="3">
    <source>
        <dbReference type="SAM" id="MobiDB-lite"/>
    </source>
</evidence>
<evidence type="ECO:0000269" key="4">
    <source>
    </source>
</evidence>
<evidence type="ECO:0000269" key="5">
    <source>
    </source>
</evidence>
<evidence type="ECO:0000269" key="6">
    <source>
    </source>
</evidence>
<evidence type="ECO:0000269" key="7">
    <source>
    </source>
</evidence>
<evidence type="ECO:0000269" key="8">
    <source>
    </source>
</evidence>
<evidence type="ECO:0000269" key="9">
    <source>
    </source>
</evidence>
<evidence type="ECO:0000269" key="10">
    <source>
    </source>
</evidence>
<evidence type="ECO:0000269" key="11">
    <source>
    </source>
</evidence>
<evidence type="ECO:0000269" key="12">
    <source>
    </source>
</evidence>
<evidence type="ECO:0000269" key="13">
    <source>
    </source>
</evidence>
<evidence type="ECO:0000305" key="14"/>
<evidence type="ECO:0007744" key="15">
    <source>
    </source>
</evidence>
<name>TRF5_YEAST</name>
<gene>
    <name type="primary">TRF5</name>
    <name type="ordered locus">YNL299W</name>
    <name type="ORF">N0440</name>
</gene>
<accession>P48561</accession>
<accession>D6W0P5</accession>
<proteinExistence type="evidence at protein level"/>
<reference key="1">
    <citation type="journal article" date="1996" name="Nucleic Acids Res.">
        <title>A novel family of TRF (DNA topoisomerase I-related function) genes required for proper nuclear segregation.</title>
        <authorList>
            <person name="Castano I.B."/>
            <person name="Heath-Pagliuso S."/>
            <person name="Sadoff B.U."/>
            <person name="Fitzhugh D.J."/>
            <person name="Christman M.F."/>
        </authorList>
    </citation>
    <scope>NUCLEOTIDE SEQUENCE [GENOMIC DNA]</scope>
    <scope>FUNCTION</scope>
</reference>
<reference key="2">
    <citation type="journal article" date="1995" name="Yeast">
        <title>Sequence analysis of a 30 kb DNA segment from yeast chromosome XIV carrying a ribosomal protein gene cluster, the genes encoding a plasma membrane protein and a subunit of replication factor C, and a novel putative serine/threonine protein kinase gene.</title>
        <authorList>
            <person name="Maurer K.C.T."/>
            <person name="Urbanus J.H.M."/>
            <person name="Planta R.J."/>
        </authorList>
    </citation>
    <scope>NUCLEOTIDE SEQUENCE [GENOMIC DNA]</scope>
    <source>
        <strain>ATCC 96604 / S288c / FY1679</strain>
    </source>
</reference>
<reference key="3">
    <citation type="journal article" date="1997" name="Nature">
        <title>The nucleotide sequence of Saccharomyces cerevisiae chromosome XIV and its evolutionary implications.</title>
        <authorList>
            <person name="Philippsen P."/>
            <person name="Kleine K."/>
            <person name="Poehlmann R."/>
            <person name="Duesterhoeft A."/>
            <person name="Hamberg K."/>
            <person name="Hegemann J.H."/>
            <person name="Obermaier B."/>
            <person name="Urrestarazu L.A."/>
            <person name="Aert R."/>
            <person name="Albermann K."/>
            <person name="Altmann R."/>
            <person name="Andre B."/>
            <person name="Baladron V."/>
            <person name="Ballesta J.P.G."/>
            <person name="Becam A.-M."/>
            <person name="Beinhauer J.D."/>
            <person name="Boskovic J."/>
            <person name="Buitrago M.J."/>
            <person name="Bussereau F."/>
            <person name="Coster F."/>
            <person name="Crouzet M."/>
            <person name="D'Angelo M."/>
            <person name="Dal Pero F."/>
            <person name="De Antoni A."/>
            <person name="del Rey F."/>
            <person name="Doignon F."/>
            <person name="Domdey H."/>
            <person name="Dubois E."/>
            <person name="Fiedler T.A."/>
            <person name="Fleig U."/>
            <person name="Floeth M."/>
            <person name="Fritz C."/>
            <person name="Gaillardin C."/>
            <person name="Garcia-Cantalejo J.M."/>
            <person name="Glansdorff N."/>
            <person name="Goffeau A."/>
            <person name="Gueldener U."/>
            <person name="Herbert C.J."/>
            <person name="Heumann K."/>
            <person name="Heuss-Neitzel D."/>
            <person name="Hilbert H."/>
            <person name="Hinni K."/>
            <person name="Iraqui Houssaini I."/>
            <person name="Jacquet M."/>
            <person name="Jimenez A."/>
            <person name="Jonniaux J.-L."/>
            <person name="Karpfinger-Hartl L."/>
            <person name="Lanfranchi G."/>
            <person name="Lepingle A."/>
            <person name="Levesque H."/>
            <person name="Lyck R."/>
            <person name="Maftahi M."/>
            <person name="Mallet L."/>
            <person name="Maurer C.T.C."/>
            <person name="Messenguy F."/>
            <person name="Mewes H.-W."/>
            <person name="Moestl D."/>
            <person name="Nasr F."/>
            <person name="Nicaud J.-M."/>
            <person name="Niedenthal R.K."/>
            <person name="Pandolfo D."/>
            <person name="Pierard A."/>
            <person name="Piravandi E."/>
            <person name="Planta R.J."/>
            <person name="Pohl T.M."/>
            <person name="Purnelle B."/>
            <person name="Rebischung C."/>
            <person name="Remacha M.A."/>
            <person name="Revuelta J.L."/>
            <person name="Rinke M."/>
            <person name="Saiz J.E."/>
            <person name="Sartorello F."/>
            <person name="Scherens B."/>
            <person name="Sen-Gupta M."/>
            <person name="Soler-Mira A."/>
            <person name="Urbanus J.H.M."/>
            <person name="Valle G."/>
            <person name="Van Dyck L."/>
            <person name="Verhasselt P."/>
            <person name="Vierendeels F."/>
            <person name="Vissers S."/>
            <person name="Voet M."/>
            <person name="Volckaert G."/>
            <person name="Wach A."/>
            <person name="Wambutt R."/>
            <person name="Wedler H."/>
            <person name="Zollner A."/>
            <person name="Hani J."/>
        </authorList>
    </citation>
    <scope>NUCLEOTIDE SEQUENCE [LARGE SCALE GENOMIC DNA]</scope>
    <source>
        <strain>ATCC 204508 / S288c</strain>
    </source>
</reference>
<reference key="4">
    <citation type="journal article" date="2014" name="G3 (Bethesda)">
        <title>The reference genome sequence of Saccharomyces cerevisiae: Then and now.</title>
        <authorList>
            <person name="Engel S.R."/>
            <person name="Dietrich F.S."/>
            <person name="Fisk D.G."/>
            <person name="Binkley G."/>
            <person name="Balakrishnan R."/>
            <person name="Costanzo M.C."/>
            <person name="Dwight S.S."/>
            <person name="Hitz B.C."/>
            <person name="Karra K."/>
            <person name="Nash R.S."/>
            <person name="Weng S."/>
            <person name="Wong E.D."/>
            <person name="Lloyd P."/>
            <person name="Skrzypek M.S."/>
            <person name="Miyasato S.R."/>
            <person name="Simison M."/>
            <person name="Cherry J.M."/>
        </authorList>
    </citation>
    <scope>GENOME REANNOTATION</scope>
    <source>
        <strain>ATCC 204508 / S288c</strain>
    </source>
</reference>
<reference key="5">
    <citation type="journal article" date="2000" name="Science">
        <title>Pol kappa: a DNA polymerase required for sister chromatid cohesion.</title>
        <authorList>
            <person name="Wang Z."/>
            <person name="Castano I.B."/>
            <person name="De Las Penas A."/>
            <person name="Adams C."/>
            <person name="Christman M.F."/>
        </authorList>
    </citation>
    <scope>FUNCTION</scope>
</reference>
<reference key="6">
    <citation type="journal article" date="2001" name="J. Biol. Chem.">
        <title>Eukaryotic DNA polymerases: proposal for a revised nomenclature.</title>
        <authorList>
            <person name="Burgers P.M.J."/>
            <person name="Koonin E.V."/>
            <person name="Bruford E."/>
            <person name="Blanco L."/>
            <person name="Burtis K.C."/>
            <person name="Christman M.F."/>
            <person name="Copeland W.C."/>
            <person name="Friedberg E.C."/>
            <person name="Hanaoka F."/>
            <person name="Hinkle D.C."/>
            <person name="Lawrence C.W."/>
            <person name="Nakanishi M."/>
            <person name="Ohmori H."/>
            <person name="Prakash L."/>
            <person name="Prakash S."/>
            <person name="Reynaud C.-A."/>
            <person name="Sugino A."/>
            <person name="Todo T."/>
            <person name="Wang Z."/>
            <person name="Weill J.-C."/>
            <person name="Woodgate R."/>
        </authorList>
    </citation>
    <scope>NOMENCLATURE</scope>
</reference>
<reference key="7">
    <citation type="journal article" date="2003" name="Mol. Cell. Biol.">
        <title>Saccharomyces cerevisiae DNA polymerase epsilon and polymerase sigma interact physically and functionally, suggesting a role for polymerase epsilon in sister chromatid cohesion.</title>
        <authorList>
            <person name="Edwards S."/>
            <person name="Li C.M."/>
            <person name="Levy D.L."/>
            <person name="Brown J."/>
            <person name="Snow P.M."/>
            <person name="Campbell J.L."/>
        </authorList>
    </citation>
    <scope>FUNCTION</scope>
    <scope>INTERACTION WITH POL2; DPB2 AND DPB11</scope>
</reference>
<reference key="8">
    <citation type="journal article" date="2003" name="Nature">
        <title>Sequencing and comparison of yeast species to identify genes and regulatory elements.</title>
        <authorList>
            <person name="Kellis M."/>
            <person name="Patterson N."/>
            <person name="Endrizzi M."/>
            <person name="Birren B.W."/>
            <person name="Lander E.S."/>
        </authorList>
    </citation>
    <scope>IDENTIFICATION OF FRAMESHIFT</scope>
</reference>
<reference key="9">
    <citation type="journal article" date="2003" name="Nature">
        <title>Global analysis of protein localization in budding yeast.</title>
        <authorList>
            <person name="Huh W.-K."/>
            <person name="Falvo J.V."/>
            <person name="Gerke L.C."/>
            <person name="Carroll A.S."/>
            <person name="Howson R.W."/>
            <person name="Weissman J.S."/>
            <person name="O'Shea E.K."/>
        </authorList>
    </citation>
    <scope>SUBCELLULAR LOCATION [LARGE SCALE ANALYSIS]</scope>
</reference>
<reference key="10">
    <citation type="journal article" date="2003" name="Nature">
        <title>Global analysis of protein expression in yeast.</title>
        <authorList>
            <person name="Ghaemmaghami S."/>
            <person name="Huh W.-K."/>
            <person name="Bower K."/>
            <person name="Howson R.W."/>
            <person name="Belle A."/>
            <person name="Dephoure N."/>
            <person name="O'Shea E.K."/>
            <person name="Weissman J.S."/>
        </authorList>
    </citation>
    <scope>LEVEL OF PROTEIN EXPRESSION [LARGE SCALE ANALYSIS]</scope>
</reference>
<reference key="11">
    <citation type="journal article" date="2005" name="Mol. Cell. Biol.">
        <title>Trf4 and Trf5 proteins of Saccharomyces cerevisiae exhibit poly(A) RNA polymerase activity but no DNA polymerase activity.</title>
        <authorList>
            <person name="Haracska L."/>
            <person name="Johnson R.E."/>
            <person name="Prakash L."/>
            <person name="Prakash S."/>
        </authorList>
    </citation>
    <scope>FUNCTION</scope>
</reference>
<reference key="12">
    <citation type="journal article" date="2006" name="EMBO Rep.">
        <title>Yeast Trf5p is a nuclear poly(A) polymerase.</title>
        <authorList>
            <person name="Houseley J."/>
            <person name="Tollervey D."/>
        </authorList>
    </citation>
    <scope>IDENTIFICATION IN THE TRAMP5 COMPLEX</scope>
    <scope>FUNCTION OF THE TRAMP5 COMPLEX</scope>
</reference>
<reference key="13">
    <citation type="journal article" date="2006" name="RNA">
        <title>Contributions of Trf4p- and Trf5p-dependent polyadenylation to the processing and degradative functions of the yeast nuclear exosome.</title>
        <authorList>
            <person name="Egecioglu D.E."/>
            <person name="Henras A.K."/>
            <person name="Chanfreau G.F."/>
        </authorList>
    </citation>
    <scope>FUNCTION</scope>
</reference>
<reference key="14">
    <citation type="journal article" date="2006" name="RNA">
        <title>Nuclear RNA surveillance in Saccharomyces cerevisiae: Trf4p-dependent polyadenylation of nascent hypomethylated tRNA and an aberrant form of 5S rRNA.</title>
        <authorList>
            <person name="Kadaba S."/>
            <person name="Wang X."/>
            <person name="Anderson J.T."/>
        </authorList>
    </citation>
    <scope>FUNCTION</scope>
</reference>
<reference key="15">
    <citation type="journal article" date="2007" name="Genetics">
        <title>Contribution of Trf4/5 and the nuclear exosome to genome stability through regulation of histone mRNA levels in Saccharomyces cerevisiae.</title>
        <authorList>
            <person name="Reis C.C."/>
            <person name="Campbell J.L."/>
        </authorList>
    </citation>
    <scope>FUNCTION</scope>
</reference>
<reference key="16">
    <citation type="journal article" date="2009" name="Science">
        <title>Global analysis of Cdk1 substrate phosphorylation sites provides insights into evolution.</title>
        <authorList>
            <person name="Holt L.J."/>
            <person name="Tuch B.B."/>
            <person name="Villen J."/>
            <person name="Johnson A.D."/>
            <person name="Gygi S.P."/>
            <person name="Morgan D.O."/>
        </authorList>
    </citation>
    <scope>PHOSPHORYLATION [LARGE SCALE ANALYSIS] AT SER-596 AND SER-602</scope>
    <scope>IDENTIFICATION BY MASS SPECTROMETRY [LARGE SCALE ANALYSIS]</scope>
</reference>
<organism>
    <name type="scientific">Saccharomyces cerevisiae (strain ATCC 204508 / S288c)</name>
    <name type="common">Baker's yeast</name>
    <dbReference type="NCBI Taxonomy" id="559292"/>
    <lineage>
        <taxon>Eukaryota</taxon>
        <taxon>Fungi</taxon>
        <taxon>Dikarya</taxon>
        <taxon>Ascomycota</taxon>
        <taxon>Saccharomycotina</taxon>
        <taxon>Saccharomycetes</taxon>
        <taxon>Saccharomycetales</taxon>
        <taxon>Saccharomycetaceae</taxon>
        <taxon>Saccharomyces</taxon>
    </lineage>
</organism>
<comment type="function">
    <text evidence="4 5 8 9 10 11 12 13">Catalytic subunit of the TRAMP5 complex which has a poly(A) RNA polymerase activity and is involved in a post-transcriptional quality control mechanism limiting inappropriate expression of genetic information. Polyadenylation is required for the degradative activity of the exosome on several of its nuclear RNA substrates like cryptic transcripts generated by RNA polymerase II and III, or hypomethylated pre-tRNAi-Met. Polyadenylates RNA processing and degradation intermediates of snRNAs, snoRNAs and mRNAs that accumulate in strains lacking a functional exosome. TRF5 is also required for proper nuclear division in mitosis and sister chromatid cohesion. Involved in the regulation of histone mRNA levels. May mediate mitotic chromosome condensation.</text>
</comment>
<comment type="catalytic activity">
    <reaction evidence="2">
        <text>RNA(n) + ATP = RNA(n)-3'-adenine ribonucleotide + diphosphate</text>
        <dbReference type="Rhea" id="RHEA:11332"/>
        <dbReference type="Rhea" id="RHEA-COMP:14527"/>
        <dbReference type="Rhea" id="RHEA-COMP:17347"/>
        <dbReference type="ChEBI" id="CHEBI:30616"/>
        <dbReference type="ChEBI" id="CHEBI:33019"/>
        <dbReference type="ChEBI" id="CHEBI:140395"/>
        <dbReference type="ChEBI" id="CHEBI:173115"/>
        <dbReference type="EC" id="2.7.7.19"/>
    </reaction>
</comment>
<comment type="cofactor">
    <cofactor evidence="1">
        <name>Mg(2+)</name>
        <dbReference type="ChEBI" id="CHEBI:18420"/>
    </cofactor>
    <cofactor evidence="1">
        <name>Mn(2+)</name>
        <dbReference type="ChEBI" id="CHEBI:29035"/>
    </cofactor>
</comment>
<comment type="subunit">
    <text evidence="5 10">Component of the TRAMP5 complex composed of at least AIR1, MTR4 and TFR5. Interacts with POL2, DPB2 and DPB11.</text>
</comment>
<comment type="interaction">
    <interactant intactId="EBI-19525">
        <id>P48561</id>
    </interactant>
    <interactant intactId="EBI-11592">
        <id>P47047</id>
        <label>MTR4</label>
    </interactant>
    <organismsDiffer>false</organismsDiffer>
    <experiments>8</experiments>
</comment>
<comment type="subcellular location">
    <subcellularLocation>
        <location evidence="6">Nucleus</location>
        <location evidence="6">Nucleolus</location>
    </subcellularLocation>
</comment>
<comment type="miscellaneous">
    <text evidence="7">Present with 2240 molecules/cell in log phase SD medium.</text>
</comment>
<comment type="similarity">
    <text evidence="14">Belongs to the DNA polymerase type-B-like family.</text>
</comment>
<comment type="caution">
    <text evidence="14">Was originally thought to have DNA polymerase activity.</text>
</comment>
<comment type="sequence caution" evidence="14">
    <conflict type="frameshift">
        <sequence resource="EMBL-CDS" id="AAC49099"/>
    </conflict>
</comment>
<comment type="sequence caution" evidence="14">
    <conflict type="frameshift">
        <sequence resource="EMBL-CDS" id="AAC49397"/>
    </conflict>
</comment>
<comment type="sequence caution" evidence="14">
    <conflict type="frameshift">
        <sequence resource="EMBL-CDS" id="CAA96217"/>
    </conflict>
</comment>
<feature type="chain" id="PRO_0000120316" description="Poly(A) RNA polymerase protein 1">
    <location>
        <begin position="1"/>
        <end position="642"/>
    </location>
</feature>
<feature type="domain" description="PAP-associated">
    <location>
        <begin position="368"/>
        <end position="428"/>
    </location>
</feature>
<feature type="region of interest" description="Disordered" evidence="3">
    <location>
        <begin position="1"/>
        <end position="29"/>
    </location>
</feature>
<feature type="region of interest" description="Disordered" evidence="3">
    <location>
        <begin position="84"/>
        <end position="104"/>
    </location>
</feature>
<feature type="region of interest" description="Disordered" evidence="3">
    <location>
        <begin position="535"/>
        <end position="642"/>
    </location>
</feature>
<feature type="compositionally biased region" description="Basic and acidic residues" evidence="3">
    <location>
        <begin position="88"/>
        <end position="100"/>
    </location>
</feature>
<feature type="compositionally biased region" description="Polar residues" evidence="3">
    <location>
        <begin position="578"/>
        <end position="588"/>
    </location>
</feature>
<feature type="compositionally biased region" description="Basic and acidic residues" evidence="3">
    <location>
        <begin position="604"/>
        <end position="635"/>
    </location>
</feature>
<feature type="binding site" evidence="1">
    <location>
        <position position="233"/>
    </location>
    <ligand>
        <name>Mg(2+)</name>
        <dbReference type="ChEBI" id="CHEBI:18420"/>
        <note>catalytic</note>
    </ligand>
</feature>
<feature type="binding site" evidence="1">
    <location>
        <position position="235"/>
    </location>
    <ligand>
        <name>Mg(2+)</name>
        <dbReference type="ChEBI" id="CHEBI:18420"/>
        <note>catalytic</note>
    </ligand>
</feature>
<feature type="binding site" evidence="1">
    <location>
        <position position="298"/>
    </location>
    <ligand>
        <name>ATP</name>
        <dbReference type="ChEBI" id="CHEBI:30616"/>
    </ligand>
</feature>
<feature type="binding site" evidence="1">
    <location>
        <position position="323"/>
    </location>
    <ligand>
        <name>ATP</name>
        <dbReference type="ChEBI" id="CHEBI:30616"/>
    </ligand>
</feature>
<feature type="binding site" evidence="1">
    <location>
        <position position="428"/>
    </location>
    <ligand>
        <name>ATP</name>
        <dbReference type="ChEBI" id="CHEBI:30616"/>
    </ligand>
</feature>
<feature type="binding site" evidence="1">
    <location>
        <position position="432"/>
    </location>
    <ligand>
        <name>ATP</name>
        <dbReference type="ChEBI" id="CHEBI:30616"/>
    </ligand>
</feature>
<feature type="modified residue" description="Phosphoserine" evidence="15">
    <location>
        <position position="596"/>
    </location>
</feature>
<feature type="modified residue" description="Phosphoserine" evidence="15">
    <location>
        <position position="602"/>
    </location>
</feature>
<feature type="sequence conflict" description="In Ref. 1; AAC49397." evidence="14" ref="1">
    <original>MH</original>
    <variation>ID</variation>
    <location>
        <begin position="354"/>
        <end position="355"/>
    </location>
</feature>